<comment type="function">
    <text>Toxic component of a type II toxin-antitoxin (TA) system. Its mode of function is controversial; it has been proposed to be an mRNA interferase but also an inhibitor of translation initiation. When overproduced in wild-type cells, inhibits bacterial growth and translation by cleavage of mRNA molecules while it has a weak effect on colony forming ability. Overproduction of Lon protease specifically activates YoeB-dependent mRNA cleavage, leading to lethality. YefM binds to the promoter region of the yefM-yeoB operon to repress transcription, YeoB acts as a corepressor.</text>
</comment>
<comment type="function">
    <text evidence="3">Shown in vitro to be an mRNA interferase that requires translation for substrate cleavage; if the mRNA is mutated so as to not be translatable it is no longer cleaved. Cleavage only occurs within translated regions. Has RNase activity and preferentially cleaves at the 3'-end of purine ribonucleotides.</text>
</comment>
<comment type="function">
    <text>Also shown in vitro to be a translation initiation blocker. Binds to the 70S ribosome and 50S ribosomal subunit; binding is inhibited by hygromycin A and tetracycline, both of which bind to the 30S subunit in the A site. Thus YoeB is located at the interface between 50S and 30S ribosomes and interacts with the A site where it cleaves mRNA, blocking translation initiation.</text>
</comment>
<comment type="subunit">
    <text evidence="2 3 5">Forms a complex with antitoxin YefM, in which the toxin is inactive. It has been described as being a YefM-YeoB(2) heterotrimer (PubMed:15980067). Also described as a YefM(2)-YoeB heterotrimer (PubMed:16109374, PubMed:17170003). Binds the 50S ribosomal subunit.</text>
</comment>
<comment type="induction">
    <text evidence="4 5 7">Repressed by YefM, more strongly repressed by the YefM(2)YoeB heterotrimer. Induced in persister cells. Ectopic expression of Salmonella or Shigella toxin VapC induces the yefM-yoeB operon and also induces Yoeb toxin activity in a Lon protease-dependent manner.</text>
</comment>
<comment type="disruption phenotype">
    <text evidence="1 4">No visible phenotype under standard growth conditions. Delays Lon protease-dependent lethality upon overexpression of Lon, but does not fully suppress it. No loss of ability to form persister cells.</text>
</comment>
<comment type="similarity">
    <text evidence="8">Belongs to the YoeB family.</text>
</comment>
<proteinExistence type="evidence at protein level"/>
<gene>
    <name type="primary">yoeB</name>
    <name type="ordered locus">b4539</name>
    <name type="ordered locus">JW5331</name>
</gene>
<keyword id="KW-0002">3D-structure</keyword>
<keyword id="KW-0255">Endonuclease</keyword>
<keyword id="KW-0378">Hydrolase</keyword>
<keyword id="KW-0540">Nuclease</keyword>
<keyword id="KW-1185">Reference proteome</keyword>
<keyword id="KW-0678">Repressor</keyword>
<keyword id="KW-0694">RNA-binding</keyword>
<keyword id="KW-1277">Toxin-antitoxin system</keyword>
<keyword id="KW-0804">Transcription</keyword>
<keyword id="KW-0805">Transcription regulation</keyword>
<dbReference type="EC" id="3.1.-.-"/>
<dbReference type="EMBL" id="U00096">
    <property type="protein sequence ID" value="ABD18681.1"/>
    <property type="molecule type" value="Genomic_DNA"/>
</dbReference>
<dbReference type="EMBL" id="AP009048">
    <property type="protein sequence ID" value="BAE76569.1"/>
    <property type="molecule type" value="Genomic_DNA"/>
</dbReference>
<dbReference type="RefSeq" id="WP_000767829.1">
    <property type="nucleotide sequence ID" value="NZ_STEB01000048.1"/>
</dbReference>
<dbReference type="RefSeq" id="YP_588458.1">
    <property type="nucleotide sequence ID" value="NC_000913.3"/>
</dbReference>
<dbReference type="PDB" id="2A6Q">
    <property type="method" value="X-ray"/>
    <property type="resolution" value="2.05 A"/>
    <property type="chains" value="E/F=1-84"/>
</dbReference>
<dbReference type="PDB" id="2A6R">
    <property type="method" value="X-ray"/>
    <property type="resolution" value="2.05 A"/>
    <property type="chains" value="A/B/C/D/E/F=1-84"/>
</dbReference>
<dbReference type="PDB" id="2A6S">
    <property type="method" value="X-ray"/>
    <property type="resolution" value="1.77 A"/>
    <property type="chains" value="A/B/C/D=1-84"/>
</dbReference>
<dbReference type="PDB" id="4V8X">
    <property type="method" value="X-ray"/>
    <property type="resolution" value="3.35 A"/>
    <property type="chains" value="AY/AZ/CY/CZ=1-84"/>
</dbReference>
<dbReference type="PDB" id="6NY6">
    <property type="method" value="X-ray"/>
    <property type="resolution" value="3.74 A"/>
    <property type="chains" value="Y/Z=1-84"/>
</dbReference>
<dbReference type="PDBsum" id="2A6Q"/>
<dbReference type="PDBsum" id="2A6R"/>
<dbReference type="PDBsum" id="2A6S"/>
<dbReference type="PDBsum" id="4V8X"/>
<dbReference type="PDBsum" id="6NY6"/>
<dbReference type="SMR" id="P69348"/>
<dbReference type="BioGRID" id="4260402">
    <property type="interactions" value="254"/>
</dbReference>
<dbReference type="BioGRID" id="853399">
    <property type="interactions" value="1"/>
</dbReference>
<dbReference type="ComplexPortal" id="CPX-1087">
    <property type="entry name" value="YoeB-YefM toxin-antitoxin complex"/>
</dbReference>
<dbReference type="FunCoup" id="P69348">
    <property type="interactions" value="13"/>
</dbReference>
<dbReference type="IntAct" id="P69348">
    <property type="interactions" value="1"/>
</dbReference>
<dbReference type="MINT" id="P69348"/>
<dbReference type="STRING" id="511145.b4539"/>
<dbReference type="PaxDb" id="511145-b4539"/>
<dbReference type="EnsemblBacteria" id="ABD18681">
    <property type="protein sequence ID" value="ABD18681"/>
    <property type="gene ID" value="b4539"/>
</dbReference>
<dbReference type="GeneID" id="1450274"/>
<dbReference type="GeneID" id="93775157"/>
<dbReference type="KEGG" id="ecj:JW5331"/>
<dbReference type="KEGG" id="eco:b4539"/>
<dbReference type="KEGG" id="ecoc:C3026_11375"/>
<dbReference type="PATRIC" id="fig|1411691.4.peg.235"/>
<dbReference type="EchoBASE" id="EB4102"/>
<dbReference type="eggNOG" id="COG4115">
    <property type="taxonomic scope" value="Bacteria"/>
</dbReference>
<dbReference type="HOGENOM" id="CLU_169492_2_2_6"/>
<dbReference type="InParanoid" id="P69348"/>
<dbReference type="OMA" id="YLYWQKT"/>
<dbReference type="OrthoDB" id="9801102at2"/>
<dbReference type="PhylomeDB" id="P69348"/>
<dbReference type="BioCyc" id="EcoCyc:MONOMER0-1041"/>
<dbReference type="BioCyc" id="MetaCyc:MONOMER0-1041"/>
<dbReference type="EvolutionaryTrace" id="P69348"/>
<dbReference type="PRO" id="PR:P69348"/>
<dbReference type="Proteomes" id="UP000000625">
    <property type="component" value="Chromosome"/>
</dbReference>
<dbReference type="GO" id="GO:0110001">
    <property type="term" value="C:toxin-antitoxin complex"/>
    <property type="evidence" value="ECO:0000353"/>
    <property type="project" value="ComplexPortal"/>
</dbReference>
<dbReference type="GO" id="GO:0004519">
    <property type="term" value="F:endonuclease activity"/>
    <property type="evidence" value="ECO:0000318"/>
    <property type="project" value="GO_Central"/>
</dbReference>
<dbReference type="GO" id="GO:0042803">
    <property type="term" value="F:protein homodimerization activity"/>
    <property type="evidence" value="ECO:0000314"/>
    <property type="project" value="EcoCyc"/>
</dbReference>
<dbReference type="GO" id="GO:0043024">
    <property type="term" value="F:ribosomal small subunit binding"/>
    <property type="evidence" value="ECO:0000314"/>
    <property type="project" value="EcoCyc"/>
</dbReference>
<dbReference type="GO" id="GO:0003723">
    <property type="term" value="F:RNA binding"/>
    <property type="evidence" value="ECO:0007669"/>
    <property type="project" value="UniProtKB-KW"/>
</dbReference>
<dbReference type="GO" id="GO:0004521">
    <property type="term" value="F:RNA endonuclease activity"/>
    <property type="evidence" value="ECO:0000314"/>
    <property type="project" value="EcoCyc"/>
</dbReference>
<dbReference type="GO" id="GO:0016892">
    <property type="term" value="F:RNA endonuclease activity, producing 3'-phosphomonoesters"/>
    <property type="evidence" value="ECO:0000314"/>
    <property type="project" value="EcoCyc"/>
</dbReference>
<dbReference type="GO" id="GO:0098795">
    <property type="term" value="P:global gene silencing by mRNA cleavage"/>
    <property type="evidence" value="ECO:0000314"/>
    <property type="project" value="UniProtKB"/>
</dbReference>
<dbReference type="GO" id="GO:0006402">
    <property type="term" value="P:mRNA catabolic process"/>
    <property type="evidence" value="ECO:0000314"/>
    <property type="project" value="EcoCyc"/>
</dbReference>
<dbReference type="GO" id="GO:0045947">
    <property type="term" value="P:negative regulation of translational initiation"/>
    <property type="evidence" value="ECO:0000314"/>
    <property type="project" value="EcoCyc"/>
</dbReference>
<dbReference type="GO" id="GO:0006355">
    <property type="term" value="P:regulation of DNA-templated transcription"/>
    <property type="evidence" value="ECO:0000303"/>
    <property type="project" value="ComplexPortal"/>
</dbReference>
<dbReference type="GO" id="GO:0040008">
    <property type="term" value="P:regulation of growth"/>
    <property type="evidence" value="ECO:0000303"/>
    <property type="project" value="ComplexPortal"/>
</dbReference>
<dbReference type="GO" id="GO:0009408">
    <property type="term" value="P:response to heat"/>
    <property type="evidence" value="ECO:0000315"/>
    <property type="project" value="EcoCyc"/>
</dbReference>
<dbReference type="GO" id="GO:0044010">
    <property type="term" value="P:single-species biofilm formation"/>
    <property type="evidence" value="ECO:0000315"/>
    <property type="project" value="EcoCyc"/>
</dbReference>
<dbReference type="FunFam" id="3.30.2310.20:FF:000001">
    <property type="entry name" value="Addiction module toxin, Txe/YoeB family"/>
    <property type="match status" value="1"/>
</dbReference>
<dbReference type="Gene3D" id="3.30.2310.20">
    <property type="entry name" value="RelE-like"/>
    <property type="match status" value="1"/>
</dbReference>
<dbReference type="InterPro" id="IPR035093">
    <property type="entry name" value="RelE/ParE_toxin_dom_sf"/>
</dbReference>
<dbReference type="InterPro" id="IPR009614">
    <property type="entry name" value="YoeB_toxin"/>
</dbReference>
<dbReference type="NCBIfam" id="TIGR02116">
    <property type="entry name" value="toxin_Txe_YoeB"/>
    <property type="match status" value="1"/>
</dbReference>
<dbReference type="PANTHER" id="PTHR38039">
    <property type="entry name" value="TOXIN YOEB"/>
    <property type="match status" value="1"/>
</dbReference>
<dbReference type="PANTHER" id="PTHR38039:SF1">
    <property type="entry name" value="TOXIN YOEB"/>
    <property type="match status" value="1"/>
</dbReference>
<dbReference type="Pfam" id="PF06769">
    <property type="entry name" value="YoeB_toxin"/>
    <property type="match status" value="1"/>
</dbReference>
<dbReference type="SUPFAM" id="SSF143011">
    <property type="entry name" value="RelE-like"/>
    <property type="match status" value="1"/>
</dbReference>
<name>YOEB_ECOLI</name>
<accession>P69348</accession>
<accession>P56605</accession>
<accession>Q2EES4</accession>
<accession>Q2MAY7</accession>
<reference key="1">
    <citation type="journal article" date="1997" name="Science">
        <title>The complete genome sequence of Escherichia coli K-12.</title>
        <authorList>
            <person name="Blattner F.R."/>
            <person name="Plunkett G. III"/>
            <person name="Bloch C.A."/>
            <person name="Perna N.T."/>
            <person name="Burland V."/>
            <person name="Riley M."/>
            <person name="Collado-Vides J."/>
            <person name="Glasner J.D."/>
            <person name="Rode C.K."/>
            <person name="Mayhew G.F."/>
            <person name="Gregor J."/>
            <person name="Davis N.W."/>
            <person name="Kirkpatrick H.A."/>
            <person name="Goeden M.A."/>
            <person name="Rose D.J."/>
            <person name="Mau B."/>
            <person name="Shao Y."/>
        </authorList>
    </citation>
    <scope>NUCLEOTIDE SEQUENCE [LARGE SCALE GENOMIC DNA]</scope>
    <source>
        <strain>K12 / MG1655 / ATCC 47076</strain>
    </source>
</reference>
<reference key="2">
    <citation type="journal article" date="2006" name="Mol. Syst. Biol.">
        <title>Highly accurate genome sequences of Escherichia coli K-12 strains MG1655 and W3110.</title>
        <authorList>
            <person name="Hayashi K."/>
            <person name="Morooka N."/>
            <person name="Yamamoto Y."/>
            <person name="Fujita K."/>
            <person name="Isono K."/>
            <person name="Choi S."/>
            <person name="Ohtsubo E."/>
            <person name="Baba T."/>
            <person name="Wanner B.L."/>
            <person name="Mori H."/>
            <person name="Horiuchi T."/>
        </authorList>
    </citation>
    <scope>NUCLEOTIDE SEQUENCE [LARGE SCALE GENOMIC DNA]</scope>
    <source>
        <strain>K12 / W3110 / ATCC 27325 / DSM 5911</strain>
    </source>
</reference>
<reference key="3">
    <citation type="journal article" date="2004" name="J. Biol. Chem.">
        <title>The YefM antitoxin defines a family of natively unfolded proteins: implications as a novel antibacterial target.</title>
        <authorList>
            <person name="Cherny I."/>
            <person name="Gazit E."/>
        </authorList>
    </citation>
    <scope>FUNCTION</scope>
</reference>
<reference key="4">
    <citation type="journal article" date="2004" name="Mol. Microbiol.">
        <title>Overproduction of the Lon protease triggers inhibition of translation in Escherichia coli: involvement of the yefM-yoeB toxin-antitoxin system.</title>
        <authorList>
            <person name="Christensen S.K."/>
            <person name="Maenhaut-Michel G."/>
            <person name="Mine N."/>
            <person name="Gottesman S."/>
            <person name="Gerdes K."/>
            <person name="Van Melderen L."/>
        </authorList>
    </citation>
    <scope>FUNCTION AS AN ENDORIBONUCLEASE</scope>
    <scope>DISRUPTION PHENOTYPE</scope>
    <source>
        <strain>K12 / MG1655 / ATCC 47076</strain>
    </source>
</reference>
<reference key="5">
    <citation type="journal article" date="2005" name="J. Biol. Chem.">
        <title>The YoeB toxin is a folded protein that forms a physical complex with the unfolded YefM antitoxin. Implications for a structural-based differential stability of toxin-antitoxin systems.</title>
        <authorList>
            <person name="Cherny I."/>
            <person name="Rockah L."/>
            <person name="Gazit E."/>
        </authorList>
    </citation>
    <scope>SUBUNIT</scope>
    <source>
        <strain>K12 / MC1061 / ATCC 53338 / DSM 7140</strain>
    </source>
</reference>
<reference key="6">
    <citation type="journal article" date="2006" name="BMC Microbiol.">
        <title>Persisters: a distinct physiological state of E. coli.</title>
        <authorList>
            <person name="Shah D."/>
            <person name="Zhang Z."/>
            <person name="Khodursky A."/>
            <person name="Kaldalu N."/>
            <person name="Kurg K."/>
            <person name="Lewis K."/>
        </authorList>
    </citation>
    <scope>INDUCTION IN PERSISTER CELLS</scope>
    <scope>DISRUPTION PHENOTYPE</scope>
    <source>
        <strain>K12</strain>
    </source>
</reference>
<reference key="7">
    <citation type="journal article" date="2007" name="Nucleic Acids Res.">
        <title>Toxin-antitoxin regulation: bimodal interaction of YefM-YoeB with paired DNA palindromes exerts transcriptional autorepression.</title>
        <authorList>
            <person name="Kedzierska B."/>
            <person name="Lian L.Y."/>
            <person name="Hayes F."/>
        </authorList>
    </citation>
    <scope>FUNCTION AS A TRANSCRIPTIONAL COREPRESSOR</scope>
    <scope>SUBUNIT</scope>
    <scope>INDUCTION</scope>
</reference>
<reference key="8">
    <citation type="journal article" date="2008" name="Nucleic Acids Res.">
        <title>Translation affects YoeB and MazF messenger RNA interferase activities by different mechanisms.</title>
        <authorList>
            <person name="Christensen-Dalsgaard M."/>
            <person name="Gerdes K."/>
        </authorList>
    </citation>
    <scope>FUNCTION</scope>
    <source>
        <strain>K12</strain>
    </source>
</reference>
<reference key="9">
    <citation type="journal article" date="2009" name="J. Bacteriol.">
        <title>Influence of operator site geometry on transcriptional control by the YefM-YoeB toxin-antitoxin complex.</title>
        <authorList>
            <person name="Bailey S.E."/>
            <person name="Hayes F."/>
        </authorList>
    </citation>
    <scope>FUNCTION AS A TRANSCRIPTIONAL COREPRESSOR</scope>
</reference>
<reference key="10">
    <citation type="journal article" date="2009" name="J. Biol. Chem.">
        <title>The inhibitory mechanism of protein synthesis by YoeB, an Escherichia coli toxin.</title>
        <authorList>
            <person name="Zhang Y."/>
            <person name="Inouye M."/>
        </authorList>
    </citation>
    <scope>FUNCTION AS A TRANSLATION INITIATION BLOCKER</scope>
    <scope>RIBOSOME-BINDING</scope>
    <scope>MUTAGENESIS OF HIS-83</scope>
</reference>
<reference key="11">
    <citation type="journal article" date="2009" name="Mol. Microbiol.">
        <title>Ectopic production of VapCs from Enterobacteria inhibits translation and trans-activates YoeB mRNA interferase.</title>
        <authorList>
            <person name="Winther K.S."/>
            <person name="Gerdes K."/>
        </authorList>
    </citation>
    <scope>FUNCTION AS A TOXIN</scope>
    <scope>INDUCTION BY VAPC</scope>
    <source>
        <strain>K12 / MG1655 / ATCC 47076</strain>
    </source>
</reference>
<reference key="12">
    <citation type="journal article" date="2011" name="Proc. Natl. Acad. Sci. U.S.A.">
        <title>Bacterial persistence by RNA endonucleases.</title>
        <authorList>
            <person name="Maisonneuve E."/>
            <person name="Shakespeare L.J."/>
            <person name="Joergensen M.G."/>
            <person name="Gerdes K."/>
        </authorList>
    </citation>
    <scope>RETRACTED PAPER</scope>
    <source>
        <strain>K12 / MG1655 / ATCC 47076</strain>
    </source>
</reference>
<reference key="13">
    <citation type="journal article" date="2018" name="Proc. Natl. Acad. Sci. U.S.A.">
        <authorList>
            <person name="Maisonneuve E."/>
            <person name="Shakespeare L.J."/>
            <person name="Joergensen M.G."/>
            <person name="Gerdes K."/>
        </authorList>
    </citation>
    <scope>RETRACTION NOTICE OF PUBMED:21788497</scope>
</reference>
<reference key="14">
    <citation type="journal article" date="2005" name="Mol. Cell">
        <title>Conformational change in the catalytic site of the ribonuclease YoeB toxin by YefM antitoxin.</title>
        <authorList>
            <person name="Kamada K."/>
            <person name="Hanaoka F."/>
        </authorList>
    </citation>
    <scope>X-RAY CRYSTALLOGRAPHY (2.05 ANGSTROMS) IN COMPLEX WITH YEFM</scope>
    <scope>FUNCTION AS A RIBONUCLEASE</scope>
    <scope>SUBUNIT</scope>
    <scope>ACTIVE SITES</scope>
    <scope>MUTAGENESIS OF ARG-65; HIS-83 AND TYR-84</scope>
    <source>
        <strain>K12</strain>
    </source>
</reference>
<feature type="chain" id="PRO_0000216209" description="Toxin YoeB">
    <location>
        <begin position="1"/>
        <end position="84"/>
    </location>
</feature>
<feature type="active site" description="Proton acceptor" evidence="9">
    <location>
        <position position="46"/>
    </location>
</feature>
<feature type="active site" description="Proton donor" evidence="9">
    <location>
        <position position="83"/>
    </location>
</feature>
<feature type="mutagenesis site" description="Loss of RNase activity." evidence="3">
    <original>R</original>
    <variation>A</variation>
    <location>
        <position position="65"/>
    </location>
</feature>
<feature type="mutagenesis site" description="Loss of RNase activity; still see mRNA cleavage in association with 70S ribosomes." evidence="3 6">
    <original>H</original>
    <variation>Q</variation>
    <location>
        <position position="83"/>
    </location>
</feature>
<feature type="mutagenesis site" description="Loss of RNase activity." evidence="3">
    <original>Y</original>
    <variation>A</variation>
    <location>
        <position position="84"/>
    </location>
</feature>
<feature type="strand" evidence="10">
    <location>
        <begin position="2"/>
        <end position="5"/>
    </location>
</feature>
<feature type="helix" evidence="10">
    <location>
        <begin position="7"/>
        <end position="17"/>
    </location>
</feature>
<feature type="helix" evidence="10">
    <location>
        <begin position="21"/>
        <end position="36"/>
    </location>
</feature>
<feature type="helix" evidence="10">
    <location>
        <begin position="50"/>
        <end position="52"/>
    </location>
</feature>
<feature type="strand" evidence="10">
    <location>
        <begin position="56"/>
        <end position="63"/>
    </location>
</feature>
<feature type="strand" evidence="10">
    <location>
        <begin position="65"/>
        <end position="70"/>
    </location>
</feature>
<feature type="strand" evidence="10">
    <location>
        <begin position="72"/>
        <end position="81"/>
    </location>
</feature>
<organism>
    <name type="scientific">Escherichia coli (strain K12)</name>
    <dbReference type="NCBI Taxonomy" id="83333"/>
    <lineage>
        <taxon>Bacteria</taxon>
        <taxon>Pseudomonadati</taxon>
        <taxon>Pseudomonadota</taxon>
        <taxon>Gammaproteobacteria</taxon>
        <taxon>Enterobacterales</taxon>
        <taxon>Enterobacteriaceae</taxon>
        <taxon>Escherichia</taxon>
    </lineage>
</organism>
<sequence>MKLIWSEESWDDYLYWQETDKRIVKKINELIKDTRRTPFEGKGKPEPLKHNLSGFWSRRITEEHRLVYAVTDDSLLIAACRYHY</sequence>
<protein>
    <recommendedName>
        <fullName>Toxin YoeB</fullName>
        <ecNumber>3.1.-.-</ecNumber>
    </recommendedName>
    <alternativeName>
        <fullName>Putative endoribonuclease YoeB</fullName>
    </alternativeName>
    <alternativeName>
        <fullName>Putative mRNA interferase Yoeb</fullName>
    </alternativeName>
</protein>
<evidence type="ECO:0000269" key="1">
    <source>
    </source>
</evidence>
<evidence type="ECO:0000269" key="2">
    <source>
    </source>
</evidence>
<evidence type="ECO:0000269" key="3">
    <source>
    </source>
</evidence>
<evidence type="ECO:0000269" key="4">
    <source>
    </source>
</evidence>
<evidence type="ECO:0000269" key="5">
    <source>
    </source>
</evidence>
<evidence type="ECO:0000269" key="6">
    <source>
    </source>
</evidence>
<evidence type="ECO:0000269" key="7">
    <source>
    </source>
</evidence>
<evidence type="ECO:0000305" key="8"/>
<evidence type="ECO:0000305" key="9">
    <source>
    </source>
</evidence>
<evidence type="ECO:0007829" key="10">
    <source>
        <dbReference type="PDB" id="2A6S"/>
    </source>
</evidence>